<accession>C4L461</accession>
<keyword id="KW-0030">Aminoacyl-tRNA synthetase</keyword>
<keyword id="KW-0067">ATP-binding</keyword>
<keyword id="KW-0963">Cytoplasm</keyword>
<keyword id="KW-0436">Ligase</keyword>
<keyword id="KW-0479">Metal-binding</keyword>
<keyword id="KW-0547">Nucleotide-binding</keyword>
<keyword id="KW-0648">Protein biosynthesis</keyword>
<keyword id="KW-0694">RNA-binding</keyword>
<keyword id="KW-0820">tRNA-binding</keyword>
<keyword id="KW-0862">Zinc</keyword>
<feature type="chain" id="PRO_1000203905" description="Threonine--tRNA ligase">
    <location>
        <begin position="1"/>
        <end position="647"/>
    </location>
</feature>
<feature type="domain" description="TGS" evidence="2">
    <location>
        <begin position="1"/>
        <end position="63"/>
    </location>
</feature>
<feature type="region of interest" description="Catalytic" evidence="1">
    <location>
        <begin position="247"/>
        <end position="544"/>
    </location>
</feature>
<feature type="binding site" evidence="1">
    <location>
        <position position="340"/>
    </location>
    <ligand>
        <name>Zn(2+)</name>
        <dbReference type="ChEBI" id="CHEBI:29105"/>
    </ligand>
</feature>
<feature type="binding site" evidence="1">
    <location>
        <position position="391"/>
    </location>
    <ligand>
        <name>Zn(2+)</name>
        <dbReference type="ChEBI" id="CHEBI:29105"/>
    </ligand>
</feature>
<feature type="binding site" evidence="1">
    <location>
        <position position="521"/>
    </location>
    <ligand>
        <name>Zn(2+)</name>
        <dbReference type="ChEBI" id="CHEBI:29105"/>
    </ligand>
</feature>
<sequence>MYMIQLTFPDGAVKEFEAGVTAEDVAGSISPGLRKKAIAAKLDGELIDYRRPIEHDGKIELVMPDSEDGLDLMRHSSAHLMAQAIKRLYGEDNNIYLGIGPTIENGFYYDIEMDRRINEEDLPEIEKMMKRIVDENLEITREVVSRDEALARYKELGDPLKIELIEDIPADQTLTIYHQGEFFDLCRGPHVPSTSKLKIFKLMSVAGAYWRGDSDNKMLQRIYGTAWATKEQLAEHLRLLEEAKERDHRKLGKELDLFFVSQEVGQGLPMWLPKGASIRRTVERYIVDKELELGYQHVYTPVLGSVDLYKTSGHWDHYQDDMFPKMEMDNEELVLRPMNCPHHMTIYKHEPRSYRELPLRIAELGGMHRYEMSGALTGLQRVRYMVLNDGHTFVTPEQMKQEFKDIVHLIQEVYADFGIKDYRFRLSYRDPADKEKYFDNDAIWEMAQSQLKETMDELELPYFEAEGEAAFYGPKLDVQVRTALGKEETLSTVQLDFLLPERFDLTYTGPDGKDHRPIVLHRGVVSTMERFVAYLIEEYKGAFPTWLAPVQVKLIPVSHVHDEYVAEVKAELVKRGVRVETDLRDEKLGYKIREAQMKKIPMTLVLGDKERDERAVNIRRYGQQEQVSASLDEFIASLTDEIANRSR</sequence>
<protein>
    <recommendedName>
        <fullName evidence="1">Threonine--tRNA ligase</fullName>
        <ecNumber evidence="1">6.1.1.3</ecNumber>
    </recommendedName>
    <alternativeName>
        <fullName evidence="1">Threonyl-tRNA synthetase</fullName>
        <shortName evidence="1">ThrRS</shortName>
    </alternativeName>
</protein>
<reference key="1">
    <citation type="journal article" date="2011" name="J. Bacteriol.">
        <title>Complete genome sequence of the Thermophilic Bacterium Exiguobacterium sp. AT1b.</title>
        <authorList>
            <person name="Vishnivetskaya T.A."/>
            <person name="Lucas S."/>
            <person name="Copeland A."/>
            <person name="Lapidus A."/>
            <person name="Glavina del Rio T."/>
            <person name="Dalin E."/>
            <person name="Tice H."/>
            <person name="Bruce D.C."/>
            <person name="Goodwin L.A."/>
            <person name="Pitluck S."/>
            <person name="Saunders E."/>
            <person name="Brettin T."/>
            <person name="Detter C."/>
            <person name="Han C."/>
            <person name="Larimer F."/>
            <person name="Land M.L."/>
            <person name="Hauser L.J."/>
            <person name="Kyrpides N.C."/>
            <person name="Ovchinnikova G."/>
            <person name="Kathariou S."/>
            <person name="Ramaley R.F."/>
            <person name="Rodrigues D.F."/>
            <person name="Hendrix C."/>
            <person name="Richardson P."/>
            <person name="Tiedje J.M."/>
        </authorList>
    </citation>
    <scope>NUCLEOTIDE SEQUENCE [LARGE SCALE GENOMIC DNA]</scope>
    <source>
        <strain>ATCC BAA-1283 / AT1b</strain>
    </source>
</reference>
<comment type="function">
    <text evidence="1">Catalyzes the attachment of threonine to tRNA(Thr) in a two-step reaction: L-threonine is first activated by ATP to form Thr-AMP and then transferred to the acceptor end of tRNA(Thr). Also edits incorrectly charged L-seryl-tRNA(Thr).</text>
</comment>
<comment type="catalytic activity">
    <reaction evidence="1">
        <text>tRNA(Thr) + L-threonine + ATP = L-threonyl-tRNA(Thr) + AMP + diphosphate + H(+)</text>
        <dbReference type="Rhea" id="RHEA:24624"/>
        <dbReference type="Rhea" id="RHEA-COMP:9670"/>
        <dbReference type="Rhea" id="RHEA-COMP:9704"/>
        <dbReference type="ChEBI" id="CHEBI:15378"/>
        <dbReference type="ChEBI" id="CHEBI:30616"/>
        <dbReference type="ChEBI" id="CHEBI:33019"/>
        <dbReference type="ChEBI" id="CHEBI:57926"/>
        <dbReference type="ChEBI" id="CHEBI:78442"/>
        <dbReference type="ChEBI" id="CHEBI:78534"/>
        <dbReference type="ChEBI" id="CHEBI:456215"/>
        <dbReference type="EC" id="6.1.1.3"/>
    </reaction>
</comment>
<comment type="cofactor">
    <cofactor evidence="1">
        <name>Zn(2+)</name>
        <dbReference type="ChEBI" id="CHEBI:29105"/>
    </cofactor>
    <text evidence="1">Binds 1 zinc ion per subunit.</text>
</comment>
<comment type="subunit">
    <text evidence="1">Homodimer.</text>
</comment>
<comment type="subcellular location">
    <subcellularLocation>
        <location evidence="1">Cytoplasm</location>
    </subcellularLocation>
</comment>
<comment type="similarity">
    <text evidence="1">Belongs to the class-II aminoacyl-tRNA synthetase family.</text>
</comment>
<gene>
    <name evidence="1" type="primary">thrS</name>
    <name type="ordered locus">EAT1b_0652</name>
</gene>
<organism>
    <name type="scientific">Exiguobacterium sp. (strain ATCC BAA-1283 / AT1b)</name>
    <dbReference type="NCBI Taxonomy" id="360911"/>
    <lineage>
        <taxon>Bacteria</taxon>
        <taxon>Bacillati</taxon>
        <taxon>Bacillota</taxon>
        <taxon>Bacilli</taxon>
        <taxon>Bacillales</taxon>
        <taxon>Bacillales Family XII. Incertae Sedis</taxon>
        <taxon>Exiguobacterium</taxon>
    </lineage>
</organism>
<dbReference type="EC" id="6.1.1.3" evidence="1"/>
<dbReference type="EMBL" id="CP001615">
    <property type="protein sequence ID" value="ACQ69583.1"/>
    <property type="molecule type" value="Genomic_DNA"/>
</dbReference>
<dbReference type="RefSeq" id="WP_012726702.1">
    <property type="nucleotide sequence ID" value="NC_012673.1"/>
</dbReference>
<dbReference type="SMR" id="C4L461"/>
<dbReference type="STRING" id="360911.EAT1b_0652"/>
<dbReference type="GeneID" id="94371735"/>
<dbReference type="KEGG" id="eat:EAT1b_0652"/>
<dbReference type="eggNOG" id="COG0441">
    <property type="taxonomic scope" value="Bacteria"/>
</dbReference>
<dbReference type="HOGENOM" id="CLU_008554_3_2_9"/>
<dbReference type="OrthoDB" id="9802304at2"/>
<dbReference type="Proteomes" id="UP000000716">
    <property type="component" value="Chromosome"/>
</dbReference>
<dbReference type="GO" id="GO:0005737">
    <property type="term" value="C:cytoplasm"/>
    <property type="evidence" value="ECO:0007669"/>
    <property type="project" value="UniProtKB-SubCell"/>
</dbReference>
<dbReference type="GO" id="GO:0005524">
    <property type="term" value="F:ATP binding"/>
    <property type="evidence" value="ECO:0007669"/>
    <property type="project" value="UniProtKB-UniRule"/>
</dbReference>
<dbReference type="GO" id="GO:0140096">
    <property type="term" value="F:catalytic activity, acting on a protein"/>
    <property type="evidence" value="ECO:0007669"/>
    <property type="project" value="UniProtKB-ARBA"/>
</dbReference>
<dbReference type="GO" id="GO:0046872">
    <property type="term" value="F:metal ion binding"/>
    <property type="evidence" value="ECO:0007669"/>
    <property type="project" value="UniProtKB-KW"/>
</dbReference>
<dbReference type="GO" id="GO:0004829">
    <property type="term" value="F:threonine-tRNA ligase activity"/>
    <property type="evidence" value="ECO:0007669"/>
    <property type="project" value="UniProtKB-UniRule"/>
</dbReference>
<dbReference type="GO" id="GO:0016740">
    <property type="term" value="F:transferase activity"/>
    <property type="evidence" value="ECO:0007669"/>
    <property type="project" value="UniProtKB-ARBA"/>
</dbReference>
<dbReference type="GO" id="GO:0000049">
    <property type="term" value="F:tRNA binding"/>
    <property type="evidence" value="ECO:0007669"/>
    <property type="project" value="UniProtKB-KW"/>
</dbReference>
<dbReference type="GO" id="GO:0006435">
    <property type="term" value="P:threonyl-tRNA aminoacylation"/>
    <property type="evidence" value="ECO:0007669"/>
    <property type="project" value="UniProtKB-UniRule"/>
</dbReference>
<dbReference type="CDD" id="cd01667">
    <property type="entry name" value="TGS_ThrRS"/>
    <property type="match status" value="1"/>
</dbReference>
<dbReference type="CDD" id="cd00860">
    <property type="entry name" value="ThrRS_anticodon"/>
    <property type="match status" value="1"/>
</dbReference>
<dbReference type="CDD" id="cd00771">
    <property type="entry name" value="ThrRS_core"/>
    <property type="match status" value="1"/>
</dbReference>
<dbReference type="FunFam" id="3.10.20.30:FF:000005">
    <property type="entry name" value="Threonine--tRNA ligase"/>
    <property type="match status" value="1"/>
</dbReference>
<dbReference type="FunFam" id="3.30.54.20:FF:000002">
    <property type="entry name" value="Threonine--tRNA ligase"/>
    <property type="match status" value="1"/>
</dbReference>
<dbReference type="FunFam" id="3.30.930.10:FF:000002">
    <property type="entry name" value="Threonine--tRNA ligase"/>
    <property type="match status" value="1"/>
</dbReference>
<dbReference type="FunFam" id="3.40.50.800:FF:000001">
    <property type="entry name" value="Threonine--tRNA ligase"/>
    <property type="match status" value="1"/>
</dbReference>
<dbReference type="FunFam" id="3.30.980.10:FF:000005">
    <property type="entry name" value="Threonyl-tRNA synthetase, mitochondrial"/>
    <property type="match status" value="1"/>
</dbReference>
<dbReference type="Gene3D" id="3.10.20.30">
    <property type="match status" value="1"/>
</dbReference>
<dbReference type="Gene3D" id="3.30.54.20">
    <property type="match status" value="1"/>
</dbReference>
<dbReference type="Gene3D" id="3.40.50.800">
    <property type="entry name" value="Anticodon-binding domain"/>
    <property type="match status" value="1"/>
</dbReference>
<dbReference type="Gene3D" id="3.30.930.10">
    <property type="entry name" value="Bira Bifunctional Protein, Domain 2"/>
    <property type="match status" value="1"/>
</dbReference>
<dbReference type="Gene3D" id="3.30.980.10">
    <property type="entry name" value="Threonyl-trna Synthetase, Chain A, domain 2"/>
    <property type="match status" value="1"/>
</dbReference>
<dbReference type="HAMAP" id="MF_00184">
    <property type="entry name" value="Thr_tRNA_synth"/>
    <property type="match status" value="1"/>
</dbReference>
<dbReference type="InterPro" id="IPR002314">
    <property type="entry name" value="aa-tRNA-synt_IIb"/>
</dbReference>
<dbReference type="InterPro" id="IPR006195">
    <property type="entry name" value="aa-tRNA-synth_II"/>
</dbReference>
<dbReference type="InterPro" id="IPR045864">
    <property type="entry name" value="aa-tRNA-synth_II/BPL/LPL"/>
</dbReference>
<dbReference type="InterPro" id="IPR004154">
    <property type="entry name" value="Anticodon-bd"/>
</dbReference>
<dbReference type="InterPro" id="IPR036621">
    <property type="entry name" value="Anticodon-bd_dom_sf"/>
</dbReference>
<dbReference type="InterPro" id="IPR012675">
    <property type="entry name" value="Beta-grasp_dom_sf"/>
</dbReference>
<dbReference type="InterPro" id="IPR004095">
    <property type="entry name" value="TGS"/>
</dbReference>
<dbReference type="InterPro" id="IPR012676">
    <property type="entry name" value="TGS-like"/>
</dbReference>
<dbReference type="InterPro" id="IPR002320">
    <property type="entry name" value="Thr-tRNA-ligase_IIa"/>
</dbReference>
<dbReference type="InterPro" id="IPR018163">
    <property type="entry name" value="Thr/Ala-tRNA-synth_IIc_edit"/>
</dbReference>
<dbReference type="InterPro" id="IPR047246">
    <property type="entry name" value="ThrRS_anticodon"/>
</dbReference>
<dbReference type="InterPro" id="IPR033728">
    <property type="entry name" value="ThrRS_core"/>
</dbReference>
<dbReference type="InterPro" id="IPR012947">
    <property type="entry name" value="tRNA_SAD"/>
</dbReference>
<dbReference type="NCBIfam" id="TIGR00418">
    <property type="entry name" value="thrS"/>
    <property type="match status" value="1"/>
</dbReference>
<dbReference type="PANTHER" id="PTHR11451:SF56">
    <property type="entry name" value="THREONINE--TRNA LIGASE 1"/>
    <property type="match status" value="1"/>
</dbReference>
<dbReference type="PANTHER" id="PTHR11451">
    <property type="entry name" value="THREONINE-TRNA LIGASE"/>
    <property type="match status" value="1"/>
</dbReference>
<dbReference type="Pfam" id="PF03129">
    <property type="entry name" value="HGTP_anticodon"/>
    <property type="match status" value="1"/>
</dbReference>
<dbReference type="Pfam" id="PF02824">
    <property type="entry name" value="TGS"/>
    <property type="match status" value="1"/>
</dbReference>
<dbReference type="Pfam" id="PF00587">
    <property type="entry name" value="tRNA-synt_2b"/>
    <property type="match status" value="1"/>
</dbReference>
<dbReference type="Pfam" id="PF07973">
    <property type="entry name" value="tRNA_SAD"/>
    <property type="match status" value="1"/>
</dbReference>
<dbReference type="PRINTS" id="PR01047">
    <property type="entry name" value="TRNASYNTHTHR"/>
</dbReference>
<dbReference type="SMART" id="SM00863">
    <property type="entry name" value="tRNA_SAD"/>
    <property type="match status" value="1"/>
</dbReference>
<dbReference type="SUPFAM" id="SSF52954">
    <property type="entry name" value="Class II aaRS ABD-related"/>
    <property type="match status" value="1"/>
</dbReference>
<dbReference type="SUPFAM" id="SSF55681">
    <property type="entry name" value="Class II aaRS and biotin synthetases"/>
    <property type="match status" value="1"/>
</dbReference>
<dbReference type="SUPFAM" id="SSF81271">
    <property type="entry name" value="TGS-like"/>
    <property type="match status" value="1"/>
</dbReference>
<dbReference type="SUPFAM" id="SSF55186">
    <property type="entry name" value="ThrRS/AlaRS common domain"/>
    <property type="match status" value="1"/>
</dbReference>
<dbReference type="PROSITE" id="PS50862">
    <property type="entry name" value="AA_TRNA_LIGASE_II"/>
    <property type="match status" value="1"/>
</dbReference>
<dbReference type="PROSITE" id="PS51880">
    <property type="entry name" value="TGS"/>
    <property type="match status" value="1"/>
</dbReference>
<evidence type="ECO:0000255" key="1">
    <source>
        <dbReference type="HAMAP-Rule" id="MF_00184"/>
    </source>
</evidence>
<evidence type="ECO:0000255" key="2">
    <source>
        <dbReference type="PROSITE-ProRule" id="PRU01228"/>
    </source>
</evidence>
<proteinExistence type="inferred from homology"/>
<name>SYT_EXISA</name>